<protein>
    <recommendedName>
        <fullName>Uncharacterized protein Mb2034c</fullName>
    </recommendedName>
</protein>
<name>Y2034_MYCBO</name>
<feature type="signal peptide" evidence="1">
    <location>
        <begin position="1"/>
        <end position="27"/>
    </location>
</feature>
<feature type="chain" id="PRO_0000014119" description="Uncharacterized protein Mb2034c">
    <location>
        <begin position="28"/>
        <end position="143"/>
    </location>
</feature>
<reference key="1">
    <citation type="journal article" date="2003" name="Proc. Natl. Acad. Sci. U.S.A.">
        <title>The complete genome sequence of Mycobacterium bovis.</title>
        <authorList>
            <person name="Garnier T."/>
            <person name="Eiglmeier K."/>
            <person name="Camus J.-C."/>
            <person name="Medina N."/>
            <person name="Mansoor H."/>
            <person name="Pryor M."/>
            <person name="Duthoy S."/>
            <person name="Grondin S."/>
            <person name="Lacroix C."/>
            <person name="Monsempe C."/>
            <person name="Simon S."/>
            <person name="Harris B."/>
            <person name="Atkin R."/>
            <person name="Doggett J."/>
            <person name="Mayes R."/>
            <person name="Keating L."/>
            <person name="Wheeler P.R."/>
            <person name="Parkhill J."/>
            <person name="Barrell B.G."/>
            <person name="Cole S.T."/>
            <person name="Gordon S.V."/>
            <person name="Hewinson R.G."/>
        </authorList>
    </citation>
    <scope>NUCLEOTIDE SEQUENCE [LARGE SCALE GENOMIC DNA]</scope>
    <source>
        <strain>ATCC BAA-935 / AF2122/97</strain>
    </source>
</reference>
<reference key="2">
    <citation type="journal article" date="2017" name="Genome Announc.">
        <title>Updated reference genome sequence and annotation of Mycobacterium bovis AF2122/97.</title>
        <authorList>
            <person name="Malone K.M."/>
            <person name="Farrell D."/>
            <person name="Stuber T.P."/>
            <person name="Schubert O.T."/>
            <person name="Aebersold R."/>
            <person name="Robbe-Austerman S."/>
            <person name="Gordon S.V."/>
        </authorList>
    </citation>
    <scope>NUCLEOTIDE SEQUENCE [LARGE SCALE GENOMIC DNA]</scope>
    <scope>GENOME REANNOTATION</scope>
    <source>
        <strain>ATCC BAA-935 / AF2122/97</strain>
    </source>
</reference>
<sequence length="143" mass="15725">MSDEIARLVADVFELAGLLRRSGEVVAAREGHTQARWQLLSVVSDRALTVPQAARRLGVTRQGVQRVANDLVVCGLAELRHNPDHRTSPLLVLTENGRRVLQAITERAIVVNNRLADAVDPAALQATRDSLRRMIVALKAERP</sequence>
<keyword id="KW-1185">Reference proteome</keyword>
<keyword id="KW-0732">Signal</keyword>
<organism>
    <name type="scientific">Mycobacterium bovis (strain ATCC BAA-935 / AF2122/97)</name>
    <dbReference type="NCBI Taxonomy" id="233413"/>
    <lineage>
        <taxon>Bacteria</taxon>
        <taxon>Bacillati</taxon>
        <taxon>Actinomycetota</taxon>
        <taxon>Actinomycetes</taxon>
        <taxon>Mycobacteriales</taxon>
        <taxon>Mycobacteriaceae</taxon>
        <taxon>Mycobacterium</taxon>
        <taxon>Mycobacterium tuberculosis complex</taxon>
    </lineage>
</organism>
<accession>P64928</accession>
<accession>A0A1R3XZX1</accession>
<accession>Q10846</accession>
<accession>X2BJS0</accession>
<dbReference type="EMBL" id="LT708304">
    <property type="protein sequence ID" value="SIU00641.1"/>
    <property type="molecule type" value="Genomic_DNA"/>
</dbReference>
<dbReference type="RefSeq" id="NP_855684.1">
    <property type="nucleotide sequence ID" value="NC_002945.3"/>
</dbReference>
<dbReference type="RefSeq" id="WP_003410078.1">
    <property type="nucleotide sequence ID" value="NC_002945.4"/>
</dbReference>
<dbReference type="SMR" id="P64928"/>
<dbReference type="KEGG" id="mbo:BQ2027_MB2034C"/>
<dbReference type="PATRIC" id="fig|233413.5.peg.2235"/>
<dbReference type="Proteomes" id="UP000001419">
    <property type="component" value="Chromosome"/>
</dbReference>
<dbReference type="GO" id="GO:0003700">
    <property type="term" value="F:DNA-binding transcription factor activity"/>
    <property type="evidence" value="ECO:0007669"/>
    <property type="project" value="InterPro"/>
</dbReference>
<dbReference type="GO" id="GO:0006950">
    <property type="term" value="P:response to stress"/>
    <property type="evidence" value="ECO:0007669"/>
    <property type="project" value="TreeGrafter"/>
</dbReference>
<dbReference type="Gene3D" id="1.10.10.10">
    <property type="entry name" value="Winged helix-like DNA-binding domain superfamily/Winged helix DNA-binding domain"/>
    <property type="match status" value="1"/>
</dbReference>
<dbReference type="InterPro" id="IPR000835">
    <property type="entry name" value="HTH_MarR-typ"/>
</dbReference>
<dbReference type="InterPro" id="IPR039422">
    <property type="entry name" value="MarR/SlyA-like"/>
</dbReference>
<dbReference type="InterPro" id="IPR036388">
    <property type="entry name" value="WH-like_DNA-bd_sf"/>
</dbReference>
<dbReference type="InterPro" id="IPR036390">
    <property type="entry name" value="WH_DNA-bd_sf"/>
</dbReference>
<dbReference type="PANTHER" id="PTHR33164:SF43">
    <property type="entry name" value="HTH-TYPE TRANSCRIPTIONAL REPRESSOR YETL"/>
    <property type="match status" value="1"/>
</dbReference>
<dbReference type="PANTHER" id="PTHR33164">
    <property type="entry name" value="TRANSCRIPTIONAL REGULATOR, MARR FAMILY"/>
    <property type="match status" value="1"/>
</dbReference>
<dbReference type="Pfam" id="PF12802">
    <property type="entry name" value="MarR_2"/>
    <property type="match status" value="1"/>
</dbReference>
<dbReference type="SUPFAM" id="SSF46785">
    <property type="entry name" value="Winged helix' DNA-binding domain"/>
    <property type="match status" value="1"/>
</dbReference>
<gene>
    <name type="ordered locus">BQ2027_MB2034C</name>
</gene>
<evidence type="ECO:0000255" key="1"/>
<proteinExistence type="inferred from homology"/>